<accession>Q54B37</accession>
<name>GXCJ_DICDI</name>
<comment type="function">
    <text evidence="1">GTPase-activating protein.</text>
</comment>
<dbReference type="EMBL" id="AAFI02000224">
    <property type="protein sequence ID" value="EAL60488.1"/>
    <property type="molecule type" value="Genomic_DNA"/>
</dbReference>
<dbReference type="RefSeq" id="XP_628879.1">
    <property type="nucleotide sequence ID" value="XM_628877.1"/>
</dbReference>
<dbReference type="FunCoup" id="Q54B37">
    <property type="interactions" value="596"/>
</dbReference>
<dbReference type="STRING" id="44689.Q54B37"/>
<dbReference type="PaxDb" id="44689-DDB0233315"/>
<dbReference type="EnsemblProtists" id="EAL60488">
    <property type="protein sequence ID" value="EAL60488"/>
    <property type="gene ID" value="DDB_G0293978"/>
</dbReference>
<dbReference type="GeneID" id="8629495"/>
<dbReference type="KEGG" id="ddi:DDB_G0293978"/>
<dbReference type="dictyBase" id="DDB_G0293978">
    <property type="gene designation" value="gxcJ"/>
</dbReference>
<dbReference type="VEuPathDB" id="AmoebaDB:DDB_G0293978"/>
<dbReference type="eggNOG" id="KOG3519">
    <property type="taxonomic scope" value="Eukaryota"/>
</dbReference>
<dbReference type="HOGENOM" id="CLU_276011_0_0_1"/>
<dbReference type="InParanoid" id="Q54B37"/>
<dbReference type="OMA" id="RTMQIIQ"/>
<dbReference type="Reactome" id="R-DDI-193648">
    <property type="pathway name" value="NRAGE signals death through JNK"/>
</dbReference>
<dbReference type="Reactome" id="R-DDI-9013148">
    <property type="pathway name" value="CDC42 GTPase cycle"/>
</dbReference>
<dbReference type="Reactome" id="R-DDI-9013149">
    <property type="pathway name" value="RAC1 GTPase cycle"/>
</dbReference>
<dbReference type="Reactome" id="R-DDI-9013406">
    <property type="pathway name" value="RHOQ GTPase cycle"/>
</dbReference>
<dbReference type="PRO" id="PR:Q54B37"/>
<dbReference type="Proteomes" id="UP000002195">
    <property type="component" value="Chromosome 6"/>
</dbReference>
<dbReference type="GO" id="GO:0005829">
    <property type="term" value="C:cytosol"/>
    <property type="evidence" value="ECO:0000318"/>
    <property type="project" value="GO_Central"/>
</dbReference>
<dbReference type="GO" id="GO:0005085">
    <property type="term" value="F:guanyl-nucleotide exchange factor activity"/>
    <property type="evidence" value="ECO:0000318"/>
    <property type="project" value="GO_Central"/>
</dbReference>
<dbReference type="CDD" id="cd00160">
    <property type="entry name" value="RhoGEF"/>
    <property type="match status" value="1"/>
</dbReference>
<dbReference type="Gene3D" id="1.20.900.10">
    <property type="entry name" value="Dbl homology (DH) domain"/>
    <property type="match status" value="1"/>
</dbReference>
<dbReference type="InterPro" id="IPR035899">
    <property type="entry name" value="DBL_dom_sf"/>
</dbReference>
<dbReference type="InterPro" id="IPR000219">
    <property type="entry name" value="DH_dom"/>
</dbReference>
<dbReference type="InterPro" id="IPR025874">
    <property type="entry name" value="DZR"/>
</dbReference>
<dbReference type="InterPro" id="IPR053086">
    <property type="entry name" value="RhoGEF_domain"/>
</dbReference>
<dbReference type="PANTHER" id="PTHR45834">
    <property type="entry name" value="RHO GUANINE NUCLEOTIDE EXCHANGE FACTOR 9-RELATED"/>
    <property type="match status" value="1"/>
</dbReference>
<dbReference type="PANTHER" id="PTHR45834:SF11">
    <property type="entry name" value="RHOGEF DOMAIN-CONTAINING PROTEIN GXCJ"/>
    <property type="match status" value="1"/>
</dbReference>
<dbReference type="Pfam" id="PF12773">
    <property type="entry name" value="DZR"/>
    <property type="match status" value="1"/>
</dbReference>
<dbReference type="Pfam" id="PF00621">
    <property type="entry name" value="RhoGEF"/>
    <property type="match status" value="1"/>
</dbReference>
<dbReference type="SMART" id="SM00325">
    <property type="entry name" value="RhoGEF"/>
    <property type="match status" value="1"/>
</dbReference>
<dbReference type="SUPFAM" id="SSF48065">
    <property type="entry name" value="DBL homology domain (DH-domain)"/>
    <property type="match status" value="1"/>
</dbReference>
<dbReference type="SUPFAM" id="SSF50729">
    <property type="entry name" value="PH domain-like"/>
    <property type="match status" value="1"/>
</dbReference>
<dbReference type="PROSITE" id="PS50010">
    <property type="entry name" value="DH_2"/>
    <property type="match status" value="1"/>
</dbReference>
<sequence>MLIHPFIQSFTEIIDNRMKLGNNMEGVIECKNCQTDTPKCNKVCLTCNSDIGERCWRCNYLGKINSKFCFRCNVKLHPTSIPPKDSIQPIPIFTKHPIASTLLINKSIIPTQSENNSINDNNNNNNNNNNNNNNNNNNNNNNNNNNNNNTNNNDSKIIDATITNTKNNNTTNNNNISNNNSSNIISNSNNNNNNNNNNNNNNNNNNNNNNNLNFLKKSTSCDNGSFESISDSISPIKDIINNINNRTKDIEKLNSALPLNKKSNSSTSWSNFNTFKNNSKTNNNNNNNNNNNNNNNNNNNNNNYKPTITSSQTQPSLMENSKDIDKKEKIPSNINNNRSTTIIYKYQEDNSEDYTDDGDFEEFQINSNLTSESSSIDSLIIKDGVIATTVTSSTINCINDNNFDPDQLSSSTSSIKKPKLFYSITKKKLVSQSPPPPQPPFLASASSSSTTTITTTDSLEKSIKDSTPIATTLVNDYQNQNQNLNNESAASSSSLSTTTTTTTTTTTTTLLPDSQTNLNNLIFIEKLNNDLSGSIETLNNSLNNSLNSLNSSFNFRLNLNSITNNEDKRLSNSSLLDEIIDAFPSPPSKNPYISVLNTSGGIGSNSNSSNNNNSNSNNITNSNSSSFSKKNSNNNNNYQPVISLPIPIVNHQQQQQQQQLQTAAILGNNNINFIQNPSSTSTTTTTTTASTTTILIKSDHRTNLIKEILTTELDYVNDLETIINVFCKPLRDFISNEDSASIFSNIEQIWQINKQLYENLISNTLTIGQVFSNMSDSLKVYSVYCNYHQKSLDSLNQLLKTPQNESFFDQLLSKPELRGMGPHSFLIKPVQRICKYPLLLKELLKATAEDHFDYPQLILAVEKIEKIVGTINSQKKEMETWQRTMQLIQNLKGADNLQLLAANRHLILEGSLHLVIGFTENAEKKNSSLKFKKGVYFLFNDLFLFTKQKGTTYKLLFYTQLDNVLIHANVSNCFPADKSVFSLVEIGVGGRKWTFCNTNSNSSNISNSGNSSGIINSSSSSSGSCSNGGNSSGYNNLNNTCGIYSGNSNNNNNNNNNNNNIFSTIQKLIEKTWEDKFMGQSSVSHRLSIPSTSSPNNGASLNGNSSSNSSSTSISTVGSPNVTSAAKQQQQLQQQQQSSKKRNRRLVKSLVNIKT</sequence>
<protein>
    <recommendedName>
        <fullName>RhoGEF domain-containing protein gxcJ</fullName>
    </recommendedName>
</protein>
<evidence type="ECO:0000250" key="1"/>
<evidence type="ECO:0000255" key="2"/>
<evidence type="ECO:0000255" key="3">
    <source>
        <dbReference type="PROSITE-ProRule" id="PRU00062"/>
    </source>
</evidence>
<evidence type="ECO:0000256" key="4">
    <source>
        <dbReference type="SAM" id="MobiDB-lite"/>
    </source>
</evidence>
<keyword id="KW-0175">Coiled coil</keyword>
<keyword id="KW-0344">Guanine-nucleotide releasing factor</keyword>
<keyword id="KW-1185">Reference proteome</keyword>
<feature type="chain" id="PRO_0000377437" description="RhoGEF domain-containing protein gxcJ">
    <location>
        <begin position="1"/>
        <end position="1155"/>
    </location>
</feature>
<feature type="domain" description="DH" evidence="3">
    <location>
        <begin position="700"/>
        <end position="874"/>
    </location>
</feature>
<feature type="region of interest" description="Disordered" evidence="4">
    <location>
        <begin position="114"/>
        <end position="216"/>
    </location>
</feature>
<feature type="region of interest" description="Disordered" evidence="4">
    <location>
        <begin position="259"/>
        <end position="333"/>
    </location>
</feature>
<feature type="region of interest" description="Disordered" evidence="4">
    <location>
        <begin position="429"/>
        <end position="460"/>
    </location>
</feature>
<feature type="region of interest" description="Disordered" evidence="4">
    <location>
        <begin position="484"/>
        <end position="508"/>
    </location>
</feature>
<feature type="region of interest" description="Disordered" evidence="4">
    <location>
        <begin position="604"/>
        <end position="639"/>
    </location>
</feature>
<feature type="region of interest" description="Disordered" evidence="4">
    <location>
        <begin position="1084"/>
        <end position="1155"/>
    </location>
</feature>
<feature type="coiled-coil region" evidence="2">
    <location>
        <begin position="192"/>
        <end position="257"/>
    </location>
</feature>
<feature type="compositionally biased region" description="Low complexity" evidence="4">
    <location>
        <begin position="115"/>
        <end position="153"/>
    </location>
</feature>
<feature type="compositionally biased region" description="Low complexity" evidence="4">
    <location>
        <begin position="161"/>
        <end position="211"/>
    </location>
</feature>
<feature type="compositionally biased region" description="Low complexity" evidence="4">
    <location>
        <begin position="260"/>
        <end position="303"/>
    </location>
</feature>
<feature type="compositionally biased region" description="Polar residues" evidence="4">
    <location>
        <begin position="304"/>
        <end position="319"/>
    </location>
</feature>
<feature type="compositionally biased region" description="Basic and acidic residues" evidence="4">
    <location>
        <begin position="320"/>
        <end position="330"/>
    </location>
</feature>
<feature type="compositionally biased region" description="Low complexity" evidence="4">
    <location>
        <begin position="441"/>
        <end position="457"/>
    </location>
</feature>
<feature type="compositionally biased region" description="Low complexity" evidence="4">
    <location>
        <begin position="604"/>
        <end position="637"/>
    </location>
</feature>
<feature type="compositionally biased region" description="Low complexity" evidence="4">
    <location>
        <begin position="1093"/>
        <end position="1121"/>
    </location>
</feature>
<feature type="compositionally biased region" description="Low complexity" evidence="4">
    <location>
        <begin position="1128"/>
        <end position="1137"/>
    </location>
</feature>
<proteinExistence type="inferred from homology"/>
<organism>
    <name type="scientific">Dictyostelium discoideum</name>
    <name type="common">Social amoeba</name>
    <dbReference type="NCBI Taxonomy" id="44689"/>
    <lineage>
        <taxon>Eukaryota</taxon>
        <taxon>Amoebozoa</taxon>
        <taxon>Evosea</taxon>
        <taxon>Eumycetozoa</taxon>
        <taxon>Dictyostelia</taxon>
        <taxon>Dictyosteliales</taxon>
        <taxon>Dictyosteliaceae</taxon>
        <taxon>Dictyostelium</taxon>
    </lineage>
</organism>
<gene>
    <name type="primary">gxcJ</name>
    <name type="ORF">DDB_0233315</name>
</gene>
<reference key="1">
    <citation type="journal article" date="2005" name="Nature">
        <title>The genome of the social amoeba Dictyostelium discoideum.</title>
        <authorList>
            <person name="Eichinger L."/>
            <person name="Pachebat J.A."/>
            <person name="Gloeckner G."/>
            <person name="Rajandream M.A."/>
            <person name="Sucgang R."/>
            <person name="Berriman M."/>
            <person name="Song J."/>
            <person name="Olsen R."/>
            <person name="Szafranski K."/>
            <person name="Xu Q."/>
            <person name="Tunggal B."/>
            <person name="Kummerfeld S."/>
            <person name="Madera M."/>
            <person name="Konfortov B.A."/>
            <person name="Rivero F."/>
            <person name="Bankier A.T."/>
            <person name="Lehmann R."/>
            <person name="Hamlin N."/>
            <person name="Davies R."/>
            <person name="Gaudet P."/>
            <person name="Fey P."/>
            <person name="Pilcher K."/>
            <person name="Chen G."/>
            <person name="Saunders D."/>
            <person name="Sodergren E.J."/>
            <person name="Davis P."/>
            <person name="Kerhornou A."/>
            <person name="Nie X."/>
            <person name="Hall N."/>
            <person name="Anjard C."/>
            <person name="Hemphill L."/>
            <person name="Bason N."/>
            <person name="Farbrother P."/>
            <person name="Desany B."/>
            <person name="Just E."/>
            <person name="Morio T."/>
            <person name="Rost R."/>
            <person name="Churcher C.M."/>
            <person name="Cooper J."/>
            <person name="Haydock S."/>
            <person name="van Driessche N."/>
            <person name="Cronin A."/>
            <person name="Goodhead I."/>
            <person name="Muzny D.M."/>
            <person name="Mourier T."/>
            <person name="Pain A."/>
            <person name="Lu M."/>
            <person name="Harper D."/>
            <person name="Lindsay R."/>
            <person name="Hauser H."/>
            <person name="James K.D."/>
            <person name="Quiles M."/>
            <person name="Madan Babu M."/>
            <person name="Saito T."/>
            <person name="Buchrieser C."/>
            <person name="Wardroper A."/>
            <person name="Felder M."/>
            <person name="Thangavelu M."/>
            <person name="Johnson D."/>
            <person name="Knights A."/>
            <person name="Loulseged H."/>
            <person name="Mungall K.L."/>
            <person name="Oliver K."/>
            <person name="Price C."/>
            <person name="Quail M.A."/>
            <person name="Urushihara H."/>
            <person name="Hernandez J."/>
            <person name="Rabbinowitsch E."/>
            <person name="Steffen D."/>
            <person name="Sanders M."/>
            <person name="Ma J."/>
            <person name="Kohara Y."/>
            <person name="Sharp S."/>
            <person name="Simmonds M.N."/>
            <person name="Spiegler S."/>
            <person name="Tivey A."/>
            <person name="Sugano S."/>
            <person name="White B."/>
            <person name="Walker D."/>
            <person name="Woodward J.R."/>
            <person name="Winckler T."/>
            <person name="Tanaka Y."/>
            <person name="Shaulsky G."/>
            <person name="Schleicher M."/>
            <person name="Weinstock G.M."/>
            <person name="Rosenthal A."/>
            <person name="Cox E.C."/>
            <person name="Chisholm R.L."/>
            <person name="Gibbs R.A."/>
            <person name="Loomis W.F."/>
            <person name="Platzer M."/>
            <person name="Kay R.R."/>
            <person name="Williams J.G."/>
            <person name="Dear P.H."/>
            <person name="Noegel A.A."/>
            <person name="Barrell B.G."/>
            <person name="Kuspa A."/>
        </authorList>
    </citation>
    <scope>NUCLEOTIDE SEQUENCE [LARGE SCALE GENOMIC DNA]</scope>
    <source>
        <strain>AX4</strain>
    </source>
</reference>